<name>COPE1_ORYSJ</name>
<accession>Q9MAX6</accession>
<accession>B7E599</accession>
<accession>Q7XLD6</accession>
<gene>
    <name type="primary">COPE1</name>
    <name type="ordered locus">Os04g0612600</name>
    <name type="ordered locus">LOC_Os04g52270</name>
    <name type="ORF">OsJ_015440</name>
    <name type="ORF">OSJNBa0070C17.12</name>
</gene>
<keyword id="KW-0963">Cytoplasm</keyword>
<keyword id="KW-0968">Cytoplasmic vesicle</keyword>
<keyword id="KW-0931">ER-Golgi transport</keyword>
<keyword id="KW-0333">Golgi apparatus</keyword>
<keyword id="KW-0472">Membrane</keyword>
<keyword id="KW-0653">Protein transport</keyword>
<keyword id="KW-1185">Reference proteome</keyword>
<keyword id="KW-0813">Transport</keyword>
<reference key="1">
    <citation type="submission" date="2000-04" db="EMBL/GenBank/DDBJ databases">
        <title>Identification of epsilon-COP genes from various organisms.</title>
        <authorList>
            <person name="Hahn Y."/>
            <person name="Chung J.H."/>
        </authorList>
    </citation>
    <scope>NUCLEOTIDE SEQUENCE [MRNA]</scope>
    <source>
        <strain>cv. Nipponbare</strain>
    </source>
</reference>
<reference key="2">
    <citation type="journal article" date="2002" name="Nature">
        <title>Sequence and analysis of rice chromosome 4.</title>
        <authorList>
            <person name="Feng Q."/>
            <person name="Zhang Y."/>
            <person name="Hao P."/>
            <person name="Wang S."/>
            <person name="Fu G."/>
            <person name="Huang Y."/>
            <person name="Li Y."/>
            <person name="Zhu J."/>
            <person name="Liu Y."/>
            <person name="Hu X."/>
            <person name="Jia P."/>
            <person name="Zhang Y."/>
            <person name="Zhao Q."/>
            <person name="Ying K."/>
            <person name="Yu S."/>
            <person name="Tang Y."/>
            <person name="Weng Q."/>
            <person name="Zhang L."/>
            <person name="Lu Y."/>
            <person name="Mu J."/>
            <person name="Lu Y."/>
            <person name="Zhang L.S."/>
            <person name="Yu Z."/>
            <person name="Fan D."/>
            <person name="Liu X."/>
            <person name="Lu T."/>
            <person name="Li C."/>
            <person name="Wu Y."/>
            <person name="Sun T."/>
            <person name="Lei H."/>
            <person name="Li T."/>
            <person name="Hu H."/>
            <person name="Guan J."/>
            <person name="Wu M."/>
            <person name="Zhang R."/>
            <person name="Zhou B."/>
            <person name="Chen Z."/>
            <person name="Chen L."/>
            <person name="Jin Z."/>
            <person name="Wang R."/>
            <person name="Yin H."/>
            <person name="Cai Z."/>
            <person name="Ren S."/>
            <person name="Lv G."/>
            <person name="Gu W."/>
            <person name="Zhu G."/>
            <person name="Tu Y."/>
            <person name="Jia J."/>
            <person name="Zhang Y."/>
            <person name="Chen J."/>
            <person name="Kang H."/>
            <person name="Chen X."/>
            <person name="Shao C."/>
            <person name="Sun Y."/>
            <person name="Hu Q."/>
            <person name="Zhang X."/>
            <person name="Zhang W."/>
            <person name="Wang L."/>
            <person name="Ding C."/>
            <person name="Sheng H."/>
            <person name="Gu J."/>
            <person name="Chen S."/>
            <person name="Ni L."/>
            <person name="Zhu F."/>
            <person name="Chen W."/>
            <person name="Lan L."/>
            <person name="Lai Y."/>
            <person name="Cheng Z."/>
            <person name="Gu M."/>
            <person name="Jiang J."/>
            <person name="Li J."/>
            <person name="Hong G."/>
            <person name="Xue Y."/>
            <person name="Han B."/>
        </authorList>
    </citation>
    <scope>NUCLEOTIDE SEQUENCE [LARGE SCALE GENOMIC DNA]</scope>
    <source>
        <strain>cv. Nipponbare</strain>
    </source>
</reference>
<reference key="3">
    <citation type="journal article" date="2005" name="Nature">
        <title>The map-based sequence of the rice genome.</title>
        <authorList>
            <consortium name="International rice genome sequencing project (IRGSP)"/>
        </authorList>
    </citation>
    <scope>NUCLEOTIDE SEQUENCE [LARGE SCALE GENOMIC DNA]</scope>
    <source>
        <strain>cv. Nipponbare</strain>
    </source>
</reference>
<reference key="4">
    <citation type="journal article" date="2008" name="Nucleic Acids Res.">
        <title>The rice annotation project database (RAP-DB): 2008 update.</title>
        <authorList>
            <consortium name="The rice annotation project (RAP)"/>
        </authorList>
    </citation>
    <scope>GENOME REANNOTATION</scope>
    <source>
        <strain>cv. Nipponbare</strain>
    </source>
</reference>
<reference key="5">
    <citation type="journal article" date="2013" name="Rice">
        <title>Improvement of the Oryza sativa Nipponbare reference genome using next generation sequence and optical map data.</title>
        <authorList>
            <person name="Kawahara Y."/>
            <person name="de la Bastide M."/>
            <person name="Hamilton J.P."/>
            <person name="Kanamori H."/>
            <person name="McCombie W.R."/>
            <person name="Ouyang S."/>
            <person name="Schwartz D.C."/>
            <person name="Tanaka T."/>
            <person name="Wu J."/>
            <person name="Zhou S."/>
            <person name="Childs K.L."/>
            <person name="Davidson R.M."/>
            <person name="Lin H."/>
            <person name="Quesada-Ocampo L."/>
            <person name="Vaillancourt B."/>
            <person name="Sakai H."/>
            <person name="Lee S.S."/>
            <person name="Kim J."/>
            <person name="Numa H."/>
            <person name="Itoh T."/>
            <person name="Buell C.R."/>
            <person name="Matsumoto T."/>
        </authorList>
    </citation>
    <scope>GENOME REANNOTATION</scope>
    <source>
        <strain>cv. Nipponbare</strain>
    </source>
</reference>
<reference key="6">
    <citation type="journal article" date="2005" name="PLoS Biol.">
        <title>The genomes of Oryza sativa: a history of duplications.</title>
        <authorList>
            <person name="Yu J."/>
            <person name="Wang J."/>
            <person name="Lin W."/>
            <person name="Li S."/>
            <person name="Li H."/>
            <person name="Zhou J."/>
            <person name="Ni P."/>
            <person name="Dong W."/>
            <person name="Hu S."/>
            <person name="Zeng C."/>
            <person name="Zhang J."/>
            <person name="Zhang Y."/>
            <person name="Li R."/>
            <person name="Xu Z."/>
            <person name="Li S."/>
            <person name="Li X."/>
            <person name="Zheng H."/>
            <person name="Cong L."/>
            <person name="Lin L."/>
            <person name="Yin J."/>
            <person name="Geng J."/>
            <person name="Li G."/>
            <person name="Shi J."/>
            <person name="Liu J."/>
            <person name="Lv H."/>
            <person name="Li J."/>
            <person name="Wang J."/>
            <person name="Deng Y."/>
            <person name="Ran L."/>
            <person name="Shi X."/>
            <person name="Wang X."/>
            <person name="Wu Q."/>
            <person name="Li C."/>
            <person name="Ren X."/>
            <person name="Wang J."/>
            <person name="Wang X."/>
            <person name="Li D."/>
            <person name="Liu D."/>
            <person name="Zhang X."/>
            <person name="Ji Z."/>
            <person name="Zhao W."/>
            <person name="Sun Y."/>
            <person name="Zhang Z."/>
            <person name="Bao J."/>
            <person name="Han Y."/>
            <person name="Dong L."/>
            <person name="Ji J."/>
            <person name="Chen P."/>
            <person name="Wu S."/>
            <person name="Liu J."/>
            <person name="Xiao Y."/>
            <person name="Bu D."/>
            <person name="Tan J."/>
            <person name="Yang L."/>
            <person name="Ye C."/>
            <person name="Zhang J."/>
            <person name="Xu J."/>
            <person name="Zhou Y."/>
            <person name="Yu Y."/>
            <person name="Zhang B."/>
            <person name="Zhuang S."/>
            <person name="Wei H."/>
            <person name="Liu B."/>
            <person name="Lei M."/>
            <person name="Yu H."/>
            <person name="Li Y."/>
            <person name="Xu H."/>
            <person name="Wei S."/>
            <person name="He X."/>
            <person name="Fang L."/>
            <person name="Zhang Z."/>
            <person name="Zhang Y."/>
            <person name="Huang X."/>
            <person name="Su Z."/>
            <person name="Tong W."/>
            <person name="Li J."/>
            <person name="Tong Z."/>
            <person name="Li S."/>
            <person name="Ye J."/>
            <person name="Wang L."/>
            <person name="Fang L."/>
            <person name="Lei T."/>
            <person name="Chen C.-S."/>
            <person name="Chen H.-C."/>
            <person name="Xu Z."/>
            <person name="Li H."/>
            <person name="Huang H."/>
            <person name="Zhang F."/>
            <person name="Xu H."/>
            <person name="Li N."/>
            <person name="Zhao C."/>
            <person name="Li S."/>
            <person name="Dong L."/>
            <person name="Huang Y."/>
            <person name="Li L."/>
            <person name="Xi Y."/>
            <person name="Qi Q."/>
            <person name="Li W."/>
            <person name="Zhang B."/>
            <person name="Hu W."/>
            <person name="Zhang Y."/>
            <person name="Tian X."/>
            <person name="Jiao Y."/>
            <person name="Liang X."/>
            <person name="Jin J."/>
            <person name="Gao L."/>
            <person name="Zheng W."/>
            <person name="Hao B."/>
            <person name="Liu S.-M."/>
            <person name="Wang W."/>
            <person name="Yuan L."/>
            <person name="Cao M."/>
            <person name="McDermott J."/>
            <person name="Samudrala R."/>
            <person name="Wang J."/>
            <person name="Wong G.K.-S."/>
            <person name="Yang H."/>
        </authorList>
    </citation>
    <scope>NUCLEOTIDE SEQUENCE [LARGE SCALE GENOMIC DNA]</scope>
    <source>
        <strain>cv. Nipponbare</strain>
    </source>
</reference>
<reference key="7">
    <citation type="journal article" date="2003" name="Science">
        <title>Collection, mapping, and annotation of over 28,000 cDNA clones from japonica rice.</title>
        <authorList>
            <consortium name="The rice full-length cDNA consortium"/>
        </authorList>
    </citation>
    <scope>NUCLEOTIDE SEQUENCE [LARGE SCALE MRNA]</scope>
    <source>
        <strain>cv. Nipponbare</strain>
    </source>
</reference>
<sequence>MASPDLLFNLRNLFYLGAYQAAINNSDVPGLDADAAAERDAIVFRSYVALGSYQLVISEIDSSAATSLQAVKLLALYLSGDKESAIVSLKEWLSDSAVGSNPVLRLIAGIIFMHEQDYTEALKHTHSGGTLDLHALNVQIFIKMHRSDYAEKQLKIMQQIDEDHTLTQLANAWLDIAVGGSKIREAYLIFQDFAEKYPMTGMVLNGKAVCCMHMGSFDEAETLLLEALNKDAKDPETLANLIVCNLHLGKPSSRYLSQLKLSHPDHVLVKRAVSAEDNFERALQAVA</sequence>
<evidence type="ECO:0000250" key="1"/>
<evidence type="ECO:0000305" key="2"/>
<dbReference type="EMBL" id="AB042115">
    <property type="protein sequence ID" value="BAA94966.1"/>
    <property type="molecule type" value="mRNA"/>
</dbReference>
<dbReference type="EMBL" id="AL731610">
    <property type="protein sequence ID" value="CAE05205.3"/>
    <property type="molecule type" value="Genomic_DNA"/>
</dbReference>
<dbReference type="EMBL" id="AP008210">
    <property type="protein sequence ID" value="BAF15761.1"/>
    <property type="molecule type" value="Genomic_DNA"/>
</dbReference>
<dbReference type="EMBL" id="AP014960">
    <property type="protein sequence ID" value="BAS90968.1"/>
    <property type="molecule type" value="Genomic_DNA"/>
</dbReference>
<dbReference type="EMBL" id="CM000141">
    <property type="protein sequence ID" value="EAZ31957.1"/>
    <property type="molecule type" value="Genomic_DNA"/>
</dbReference>
<dbReference type="EMBL" id="AK060707">
    <property type="protein sequence ID" value="BAG87546.1"/>
    <property type="molecule type" value="mRNA"/>
</dbReference>
<dbReference type="EMBL" id="AK099008">
    <property type="protein sequence ID" value="BAG93863.1"/>
    <property type="molecule type" value="mRNA"/>
</dbReference>
<dbReference type="EMBL" id="AK104427">
    <property type="protein sequence ID" value="BAG96673.1"/>
    <property type="molecule type" value="mRNA"/>
</dbReference>
<dbReference type="RefSeq" id="XP_015635608.1">
    <property type="nucleotide sequence ID" value="XM_015780122.1"/>
</dbReference>
<dbReference type="SMR" id="Q9MAX6"/>
<dbReference type="FunCoup" id="Q9MAX6">
    <property type="interactions" value="3260"/>
</dbReference>
<dbReference type="STRING" id="39947.Q9MAX6"/>
<dbReference type="PaxDb" id="39947-Q9MAX6"/>
<dbReference type="EnsemblPlants" id="Os04t0612600-01">
    <property type="protein sequence ID" value="Os04t0612600-01"/>
    <property type="gene ID" value="Os04g0612600"/>
</dbReference>
<dbReference type="EnsemblPlants" id="Os04t0612600-02">
    <property type="protein sequence ID" value="Os04t0612600-02"/>
    <property type="gene ID" value="Os04g0612600"/>
</dbReference>
<dbReference type="Gramene" id="Os04t0612600-01">
    <property type="protein sequence ID" value="Os04t0612600-01"/>
    <property type="gene ID" value="Os04g0612600"/>
</dbReference>
<dbReference type="Gramene" id="Os04t0612600-02">
    <property type="protein sequence ID" value="Os04t0612600-02"/>
    <property type="gene ID" value="Os04g0612600"/>
</dbReference>
<dbReference type="KEGG" id="dosa:Os04g0612600"/>
<dbReference type="eggNOG" id="KOG3081">
    <property type="taxonomic scope" value="Eukaryota"/>
</dbReference>
<dbReference type="HOGENOM" id="CLU_049363_0_0_1"/>
<dbReference type="InParanoid" id="Q9MAX6"/>
<dbReference type="OMA" id="MIVLSQH"/>
<dbReference type="OrthoDB" id="310217at2759"/>
<dbReference type="Proteomes" id="UP000000763">
    <property type="component" value="Chromosome 4"/>
</dbReference>
<dbReference type="Proteomes" id="UP000007752">
    <property type="component" value="Chromosome 4"/>
</dbReference>
<dbReference type="Proteomes" id="UP000059680">
    <property type="component" value="Chromosome 4"/>
</dbReference>
<dbReference type="GO" id="GO:0030126">
    <property type="term" value="C:COPI vesicle coat"/>
    <property type="evidence" value="ECO:0000318"/>
    <property type="project" value="GO_Central"/>
</dbReference>
<dbReference type="GO" id="GO:0000139">
    <property type="term" value="C:Golgi membrane"/>
    <property type="evidence" value="ECO:0007669"/>
    <property type="project" value="UniProtKB-SubCell"/>
</dbReference>
<dbReference type="GO" id="GO:0005198">
    <property type="term" value="F:structural molecule activity"/>
    <property type="evidence" value="ECO:0007669"/>
    <property type="project" value="InterPro"/>
</dbReference>
<dbReference type="GO" id="GO:0006888">
    <property type="term" value="P:endoplasmic reticulum to Golgi vesicle-mediated transport"/>
    <property type="evidence" value="ECO:0000318"/>
    <property type="project" value="GO_Central"/>
</dbReference>
<dbReference type="GO" id="GO:0006891">
    <property type="term" value="P:intra-Golgi vesicle-mediated transport"/>
    <property type="evidence" value="ECO:0000318"/>
    <property type="project" value="GO_Central"/>
</dbReference>
<dbReference type="GO" id="GO:0015031">
    <property type="term" value="P:protein transport"/>
    <property type="evidence" value="ECO:0007669"/>
    <property type="project" value="UniProtKB-KW"/>
</dbReference>
<dbReference type="GO" id="GO:0006890">
    <property type="term" value="P:retrograde vesicle-mediated transport, Golgi to endoplasmic reticulum"/>
    <property type="evidence" value="ECO:0007669"/>
    <property type="project" value="InterPro"/>
</dbReference>
<dbReference type="FunFam" id="1.25.40.10:FF:000140">
    <property type="entry name" value="Coatomer subunit epsilon"/>
    <property type="match status" value="1"/>
</dbReference>
<dbReference type="Gene3D" id="1.25.40.10">
    <property type="entry name" value="Tetratricopeptide repeat domain"/>
    <property type="match status" value="1"/>
</dbReference>
<dbReference type="InterPro" id="IPR006822">
    <property type="entry name" value="Coatomer_esu"/>
</dbReference>
<dbReference type="InterPro" id="IPR011990">
    <property type="entry name" value="TPR-like_helical_dom_sf"/>
</dbReference>
<dbReference type="PANTHER" id="PTHR10805">
    <property type="entry name" value="COATOMER SUBUNIT EPSILON"/>
    <property type="match status" value="1"/>
</dbReference>
<dbReference type="PANTHER" id="PTHR10805:SF0">
    <property type="entry name" value="COATOMER SUBUNIT EPSILON"/>
    <property type="match status" value="1"/>
</dbReference>
<dbReference type="Pfam" id="PF04733">
    <property type="entry name" value="Coatomer_E"/>
    <property type="match status" value="1"/>
</dbReference>
<dbReference type="PIRSF" id="PIRSF016478">
    <property type="entry name" value="Coatomer_esu"/>
    <property type="match status" value="1"/>
</dbReference>
<dbReference type="SUPFAM" id="SSF48452">
    <property type="entry name" value="TPR-like"/>
    <property type="match status" value="1"/>
</dbReference>
<organism>
    <name type="scientific">Oryza sativa subsp. japonica</name>
    <name type="common">Rice</name>
    <dbReference type="NCBI Taxonomy" id="39947"/>
    <lineage>
        <taxon>Eukaryota</taxon>
        <taxon>Viridiplantae</taxon>
        <taxon>Streptophyta</taxon>
        <taxon>Embryophyta</taxon>
        <taxon>Tracheophyta</taxon>
        <taxon>Spermatophyta</taxon>
        <taxon>Magnoliopsida</taxon>
        <taxon>Liliopsida</taxon>
        <taxon>Poales</taxon>
        <taxon>Poaceae</taxon>
        <taxon>BOP clade</taxon>
        <taxon>Oryzoideae</taxon>
        <taxon>Oryzeae</taxon>
        <taxon>Oryzinae</taxon>
        <taxon>Oryza</taxon>
        <taxon>Oryza sativa</taxon>
    </lineage>
</organism>
<proteinExistence type="evidence at transcript level"/>
<feature type="chain" id="PRO_0000285625" description="Coatomer subunit epsilon-1">
    <location>
        <begin position="1"/>
        <end position="287"/>
    </location>
</feature>
<protein>
    <recommendedName>
        <fullName>Coatomer subunit epsilon-1</fullName>
    </recommendedName>
    <alternativeName>
        <fullName>Epsilon-coat protein 1</fullName>
        <shortName>Epsilon-COP 1</shortName>
    </alternativeName>
    <alternativeName>
        <fullName>Epsilon1-COP</fullName>
    </alternativeName>
</protein>
<comment type="function">
    <text evidence="1">The coatomer is a cytosolic protein complex that binds to dilysine motifs and reversibly associates with Golgi non-clathrin-coated vesicles, which further mediate biosynthetic protein transport from the ER, via the Golgi up to the trans Golgi network. The coatomer complex is required for budding from Golgi membranes, and is essential for the retrograde Golgi-to-ER transport of dilysine-tagged proteins (By similarity).</text>
</comment>
<comment type="subunit">
    <text evidence="1">Oligomeric complex that consists of at least the alpha, beta, beta', gamma, delta, epsilon and zeta subunits.</text>
</comment>
<comment type="subcellular location">
    <subcellularLocation>
        <location evidence="1">Cytoplasm</location>
    </subcellularLocation>
    <subcellularLocation>
        <location evidence="1">Golgi apparatus membrane</location>
        <topology evidence="1">Peripheral membrane protein</topology>
        <orientation evidence="1">Cytoplasmic side</orientation>
    </subcellularLocation>
    <subcellularLocation>
        <location evidence="1">Cytoplasmic vesicle</location>
        <location evidence="1">COPI-coated vesicle membrane</location>
        <topology evidence="1">Peripheral membrane protein</topology>
        <orientation evidence="1">Cytoplasmic side</orientation>
    </subcellularLocation>
    <text evidence="1">The coatomer is cytoplasmic or polymerized on the cytoplasmic side of the Golgi, as well as on the vesicles/buds originating from it.</text>
</comment>
<comment type="similarity">
    <text evidence="2">Belongs to the COPE family.</text>
</comment>